<proteinExistence type="inferred from homology"/>
<keyword id="KW-0143">Chaperone</keyword>
<keyword id="KW-0344">Guanine-nucleotide releasing factor</keyword>
<keyword id="KW-0472">Membrane</keyword>
<keyword id="KW-1185">Reference proteome</keyword>
<keyword id="KW-0812">Transmembrane</keyword>
<keyword id="KW-1133">Transmembrane helix</keyword>
<evidence type="ECO:0000250" key="1">
    <source>
        <dbReference type="UniProtKB" id="Q80ZG1"/>
    </source>
</evidence>
<evidence type="ECO:0000255" key="2"/>
<evidence type="ECO:0000305" key="3"/>
<dbReference type="EMBL" id="CU329671">
    <property type="protein sequence ID" value="CAO77665.2"/>
    <property type="molecule type" value="Genomic_DNA"/>
</dbReference>
<dbReference type="RefSeq" id="XP_004001720.1">
    <property type="nucleotide sequence ID" value="XM_004001671.1"/>
</dbReference>
<dbReference type="SMR" id="G2TRT0"/>
<dbReference type="FunCoup" id="G2TRT0">
    <property type="interactions" value="521"/>
</dbReference>
<dbReference type="iPTMnet" id="G2TRT0"/>
<dbReference type="PaxDb" id="4896-SPBC3E7.04c.1"/>
<dbReference type="EnsemblFungi" id="SPBC3E7.04c.1">
    <property type="protein sequence ID" value="SPBC3E7.04c.1:pep"/>
    <property type="gene ID" value="SPBC3E7.04c"/>
</dbReference>
<dbReference type="PomBase" id="SPBC3E7.04c"/>
<dbReference type="VEuPathDB" id="FungiDB:SPBC3E7.04c"/>
<dbReference type="eggNOG" id="KOG4464">
    <property type="taxonomic scope" value="Eukaryota"/>
</dbReference>
<dbReference type="HOGENOM" id="CLU_514035_0_0_1"/>
<dbReference type="InParanoid" id="G2TRT0"/>
<dbReference type="OMA" id="IWHGTIL"/>
<dbReference type="PRO" id="PR:G2TRT0"/>
<dbReference type="Proteomes" id="UP000002485">
    <property type="component" value="Chromosome II"/>
</dbReference>
<dbReference type="GO" id="GO:0005737">
    <property type="term" value="C:cytoplasm"/>
    <property type="evidence" value="ECO:0000318"/>
    <property type="project" value="GO_Central"/>
</dbReference>
<dbReference type="GO" id="GO:0016020">
    <property type="term" value="C:membrane"/>
    <property type="evidence" value="ECO:0007669"/>
    <property type="project" value="UniProtKB-SubCell"/>
</dbReference>
<dbReference type="GO" id="GO:0001965">
    <property type="term" value="F:G-protein alpha-subunit binding"/>
    <property type="evidence" value="ECO:0000318"/>
    <property type="project" value="GO_Central"/>
</dbReference>
<dbReference type="GO" id="GO:0005085">
    <property type="term" value="F:guanyl-nucleotide exchange factor activity"/>
    <property type="evidence" value="ECO:0000318"/>
    <property type="project" value="GO_Central"/>
</dbReference>
<dbReference type="GO" id="GO:0007186">
    <property type="term" value="P:G protein-coupled receptor signaling pathway"/>
    <property type="evidence" value="ECO:0000318"/>
    <property type="project" value="GO_Central"/>
</dbReference>
<dbReference type="InterPro" id="IPR016024">
    <property type="entry name" value="ARM-type_fold"/>
</dbReference>
<dbReference type="InterPro" id="IPR019318">
    <property type="entry name" value="Gua_nucleotide_exch_fac_Ric8"/>
</dbReference>
<dbReference type="PANTHER" id="PTHR12425">
    <property type="entry name" value="SYNEMBRYN"/>
    <property type="match status" value="1"/>
</dbReference>
<dbReference type="PANTHER" id="PTHR12425:SF5">
    <property type="entry name" value="SYNEMBRYN"/>
    <property type="match status" value="1"/>
</dbReference>
<dbReference type="Pfam" id="PF10165">
    <property type="entry name" value="Ric8"/>
    <property type="match status" value="1"/>
</dbReference>
<dbReference type="SUPFAM" id="SSF48371">
    <property type="entry name" value="ARM repeat"/>
    <property type="match status" value="1"/>
</dbReference>
<organism>
    <name type="scientific">Schizosaccharomyces pombe (strain 972 / ATCC 24843)</name>
    <name type="common">Fission yeast</name>
    <dbReference type="NCBI Taxonomy" id="284812"/>
    <lineage>
        <taxon>Eukaryota</taxon>
        <taxon>Fungi</taxon>
        <taxon>Dikarya</taxon>
        <taxon>Ascomycota</taxon>
        <taxon>Taphrinomycotina</taxon>
        <taxon>Schizosaccharomycetes</taxon>
        <taxon>Schizosaccharomycetales</taxon>
        <taxon>Schizosaccharomycetaceae</taxon>
        <taxon>Schizosaccharomyces</taxon>
    </lineage>
</organism>
<reference key="1">
    <citation type="journal article" date="2002" name="Nature">
        <title>The genome sequence of Schizosaccharomyces pombe.</title>
        <authorList>
            <person name="Wood V."/>
            <person name="Gwilliam R."/>
            <person name="Rajandream M.A."/>
            <person name="Lyne M.H."/>
            <person name="Lyne R."/>
            <person name="Stewart A."/>
            <person name="Sgouros J.G."/>
            <person name="Peat N."/>
            <person name="Hayles J."/>
            <person name="Baker S.G."/>
            <person name="Basham D."/>
            <person name="Bowman S."/>
            <person name="Brooks K."/>
            <person name="Brown D."/>
            <person name="Brown S."/>
            <person name="Chillingworth T."/>
            <person name="Churcher C.M."/>
            <person name="Collins M."/>
            <person name="Connor R."/>
            <person name="Cronin A."/>
            <person name="Davis P."/>
            <person name="Feltwell T."/>
            <person name="Fraser A."/>
            <person name="Gentles S."/>
            <person name="Goble A."/>
            <person name="Hamlin N."/>
            <person name="Harris D.E."/>
            <person name="Hidalgo J."/>
            <person name="Hodgson G."/>
            <person name="Holroyd S."/>
            <person name="Hornsby T."/>
            <person name="Howarth S."/>
            <person name="Huckle E.J."/>
            <person name="Hunt S."/>
            <person name="Jagels K."/>
            <person name="James K.D."/>
            <person name="Jones L."/>
            <person name="Jones M."/>
            <person name="Leather S."/>
            <person name="McDonald S."/>
            <person name="McLean J."/>
            <person name="Mooney P."/>
            <person name="Moule S."/>
            <person name="Mungall K.L."/>
            <person name="Murphy L.D."/>
            <person name="Niblett D."/>
            <person name="Odell C."/>
            <person name="Oliver K."/>
            <person name="O'Neil S."/>
            <person name="Pearson D."/>
            <person name="Quail M.A."/>
            <person name="Rabbinowitsch E."/>
            <person name="Rutherford K.M."/>
            <person name="Rutter S."/>
            <person name="Saunders D."/>
            <person name="Seeger K."/>
            <person name="Sharp S."/>
            <person name="Skelton J."/>
            <person name="Simmonds M.N."/>
            <person name="Squares R."/>
            <person name="Squares S."/>
            <person name="Stevens K."/>
            <person name="Taylor K."/>
            <person name="Taylor R.G."/>
            <person name="Tivey A."/>
            <person name="Walsh S.V."/>
            <person name="Warren T."/>
            <person name="Whitehead S."/>
            <person name="Woodward J.R."/>
            <person name="Volckaert G."/>
            <person name="Aert R."/>
            <person name="Robben J."/>
            <person name="Grymonprez B."/>
            <person name="Weltjens I."/>
            <person name="Vanstreels E."/>
            <person name="Rieger M."/>
            <person name="Schaefer M."/>
            <person name="Mueller-Auer S."/>
            <person name="Gabel C."/>
            <person name="Fuchs M."/>
            <person name="Duesterhoeft A."/>
            <person name="Fritzc C."/>
            <person name="Holzer E."/>
            <person name="Moestl D."/>
            <person name="Hilbert H."/>
            <person name="Borzym K."/>
            <person name="Langer I."/>
            <person name="Beck A."/>
            <person name="Lehrach H."/>
            <person name="Reinhardt R."/>
            <person name="Pohl T.M."/>
            <person name="Eger P."/>
            <person name="Zimmermann W."/>
            <person name="Wedler H."/>
            <person name="Wambutt R."/>
            <person name="Purnelle B."/>
            <person name="Goffeau A."/>
            <person name="Cadieu E."/>
            <person name="Dreano S."/>
            <person name="Gloux S."/>
            <person name="Lelaure V."/>
            <person name="Mottier S."/>
            <person name="Galibert F."/>
            <person name="Aves S.J."/>
            <person name="Xiang Z."/>
            <person name="Hunt C."/>
            <person name="Moore K."/>
            <person name="Hurst S.M."/>
            <person name="Lucas M."/>
            <person name="Rochet M."/>
            <person name="Gaillardin C."/>
            <person name="Tallada V.A."/>
            <person name="Garzon A."/>
            <person name="Thode G."/>
            <person name="Daga R.R."/>
            <person name="Cruzado L."/>
            <person name="Jimenez J."/>
            <person name="Sanchez M."/>
            <person name="del Rey F."/>
            <person name="Benito J."/>
            <person name="Dominguez A."/>
            <person name="Revuelta J.L."/>
            <person name="Moreno S."/>
            <person name="Armstrong J."/>
            <person name="Forsburg S.L."/>
            <person name="Cerutti L."/>
            <person name="Lowe T."/>
            <person name="McCombie W.R."/>
            <person name="Paulsen I."/>
            <person name="Potashkin J."/>
            <person name="Shpakovski G.V."/>
            <person name="Ussery D."/>
            <person name="Barrell B.G."/>
            <person name="Nurse P."/>
        </authorList>
    </citation>
    <scope>NUCLEOTIDE SEQUENCE [LARGE SCALE GENOMIC DNA]</scope>
    <source>
        <strain>972 / ATCC 24843</strain>
    </source>
</reference>
<reference key="2">
    <citation type="journal article" date="2011" name="Science">
        <title>Comparative functional genomics of the fission yeasts.</title>
        <authorList>
            <person name="Rhind N."/>
            <person name="Chen Z."/>
            <person name="Yassour M."/>
            <person name="Thompson D.A."/>
            <person name="Haas B.J."/>
            <person name="Habib N."/>
            <person name="Wapinski I."/>
            <person name="Roy S."/>
            <person name="Lin M.F."/>
            <person name="Heiman D.I."/>
            <person name="Young S.K."/>
            <person name="Furuya K."/>
            <person name="Guo Y."/>
            <person name="Pidoux A."/>
            <person name="Chen H.M."/>
            <person name="Robbertse B."/>
            <person name="Goldberg J.M."/>
            <person name="Aoki K."/>
            <person name="Bayne E.H."/>
            <person name="Berlin A.M."/>
            <person name="Desjardins C.A."/>
            <person name="Dobbs E."/>
            <person name="Dukaj L."/>
            <person name="Fan L."/>
            <person name="FitzGerald M.G."/>
            <person name="French C."/>
            <person name="Gujja S."/>
            <person name="Hansen K."/>
            <person name="Keifenheim D."/>
            <person name="Levin J.Z."/>
            <person name="Mosher R.A."/>
            <person name="Mueller C.A."/>
            <person name="Pfiffner J."/>
            <person name="Priest M."/>
            <person name="Russ C."/>
            <person name="Smialowska A."/>
            <person name="Swoboda P."/>
            <person name="Sykes S.M."/>
            <person name="Vaughn M."/>
            <person name="Vengrova S."/>
            <person name="Yoder R."/>
            <person name="Zeng Q."/>
            <person name="Allshire R."/>
            <person name="Baulcombe D."/>
            <person name="Birren B.W."/>
            <person name="Brown W."/>
            <person name="Ekwall K."/>
            <person name="Kellis M."/>
            <person name="Leatherwood J."/>
            <person name="Levin H."/>
            <person name="Margalit H."/>
            <person name="Martienssen R."/>
            <person name="Nieduszynski C.A."/>
            <person name="Spatafora J.W."/>
            <person name="Friedman N."/>
            <person name="Dalgaard J.Z."/>
            <person name="Baumann P."/>
            <person name="Niki H."/>
            <person name="Regev A."/>
            <person name="Nusbaum C."/>
        </authorList>
    </citation>
    <scope>REVISION OF GENE MODEL</scope>
</reference>
<protein>
    <recommendedName>
        <fullName>Synembryn-like chaperone C3E7.04c</fullName>
    </recommendedName>
</protein>
<sequence>MELEAYIQSLGLGIESYSQSATQFHDEANQSFNIPISTIIKLKEACRELETSKVVAKSLNWSHLLRVISLLWEKDVSLELMKLLANCLRQVPSISVQIVHNESLKQLTTSVFEVRAPKVLSLISTFNDDLERRVVFMRFLFILLSTQTDDICLDMRQVRTQLIQMLKKMWTLNSSPSNNSQDNEMVLTEILRLLFPISKRSYLKEEDEQKILLLVIEIWASSLNNNPNSPLRWHATNALLSFNLQLLSLDQAIYVSEIACQTLQSILISREVEYLEKGLNLCFDIAAKYQNTLPPILAILLSLLSFFNIKQNLSMLLFPTNDDRKQSLQKGKSFRCLLLRLLTIPIVEPIGTYYASLLNELCDGDSQQIARIFGAGYAMGISQHSETMPFPSPLSKAASPVFQKNSRGQENTEENNLAIDPITGSMCTNRNKSQRLELSQEEKEREAERLFYLFQRLEKNSTIQVTNPIQQAVNSGFIDVVFCLIFQMSSESFIYHCYHSFVGPIHILLLMFSTFKFHEILHFIKISKAS</sequence>
<gene>
    <name type="ORF">SPBC3E7.04c</name>
</gene>
<feature type="chain" id="PRO_0000416682" description="Synembryn-like chaperone C3E7.04c">
    <location>
        <begin position="1"/>
        <end position="530"/>
    </location>
</feature>
<feature type="transmembrane region" description="Helical" evidence="2">
    <location>
        <begin position="492"/>
        <end position="512"/>
    </location>
</feature>
<accession>G2TRT0</accession>
<name>YHX4_SCHPO</name>
<comment type="function">
    <text evidence="1">Chaperone that specifically binds and folds some, but not all, nascent G alpha proteins prior to G protein heterotrimer formation, promoting their stability and activity (By similarity). Also acts as a guanine nucleotide exchange factor (GEF) for G alpha proteins by stimulating exchange of bound GDP for free GTP (By similarity).</text>
</comment>
<comment type="subcellular location">
    <subcellularLocation>
        <location evidence="3">Membrane</location>
        <topology evidence="3">Single-pass membrane protein</topology>
    </subcellularLocation>
</comment>
<comment type="similarity">
    <text evidence="3">Belongs to the synembryn family.</text>
</comment>